<reference key="1">
    <citation type="journal article" date="1998" name="Yeast">
        <title>Cloning and sequence of a 3.835 kbp DNA fragment containing the HIS4 gene and a fragment of a PEX5-like gene from Candida albicans.</title>
        <authorList>
            <person name="Navarro-Garcia F."/>
            <person name="Perez-Diaz R."/>
            <person name="Negredo A."/>
            <person name="Pla J."/>
            <person name="Nombela C."/>
        </authorList>
    </citation>
    <scope>NUCLEOTIDE SEQUENCE [GENOMIC DNA]</scope>
    <source>
        <strain>ATCC 64385 / 1001</strain>
    </source>
</reference>
<sequence length="838" mass="91836">MIFPILPVISSPEDKQSIDEFSLVGQVLFPIESVSPKKHFIHQFPHDLDIFVNAIDNATTDQIVELLNVGIKQVFVNEKQYHDAIEAGSPSSRFVVAVDVPSTELLTSEASFVTSKPFSESDLKKYNANENRVIYIESNFTQDGAIELAKNYVPVIPSTKLTVKREEENKISISAVFVSTLTTDRPDGLYTTLITTPSPSYTALGIVYSSKDSIIAAIEEKVGVYQSRKRRDELWYKGKTSGATQKLVKLSKDCDSDVIQFMVEPRTGYGFCHRETKFTCFGDDIADSPARGLPKLDSTLQDRLENAPEGSYTKRLFDDEKLLIAKLKEELDELIEAKSKEEIAWECADLVYFAMVWCIKHGVRLADIEKNLDVKSLKVSRRKGDAKPQYQEAPVNSSYKLEIVSVDDAAAVERAMTRPVQKTADIMKLVLPIIEKVKSDGDKALIELTSKFDGVKLDAPVLQAPFPADLMDISEEMKAAIDLSMQNIEKFHAAQLPKEKVMTVETSPGVYCSRFAKPIENVGLYVPGGTAVLPSTAMMLGVPAKVAGCKNIIVASPPSRATGKLTPEVVYVAHKLGAKCIVMAGGAQAVTAMAYGTESVLKCDKILGPGNQFVTAAKMYVQNDTQALCSIDMPAGPSEVLVIADSNADADFVASDLLSQAEHGVDSQVILIGVGLSDEKLNEFQAAVERQAKVLPRKDIVAKCLAHSYILLAKTYKEAFDLSNQYAPEHLILQIDDAPSYVPDSIENAGSVFVGALSPESCGDYSSGTNHTLPTYGYARQYSGVNTATFQKFITSQEVTEKGLQNIGKAVMELARVEGLEAHRRAVEIRMERMAETK</sequence>
<feature type="chain" id="PRO_0000135909" description="Histidine biosynthesis trifunctional protein">
    <location>
        <begin position="1"/>
        <end position="838"/>
    </location>
</feature>
<feature type="region of interest" description="Phosphoribosyl-AMP cyclohydrolase">
    <location>
        <begin position="1"/>
        <end position="271"/>
    </location>
</feature>
<feature type="region of interest" description="Phosphoribosyl-ATP pyrophosphohydrolase">
    <location>
        <begin position="272"/>
        <end position="360"/>
    </location>
</feature>
<feature type="region of interest" description="Histidinol dehydrogenase">
    <location>
        <begin position="361"/>
        <end position="838"/>
    </location>
</feature>
<feature type="active site" evidence="1">
    <location>
        <position position="729"/>
    </location>
</feature>
<feature type="active site" evidence="1">
    <location>
        <position position="730"/>
    </location>
</feature>
<feature type="binding site" evidence="1">
    <location>
        <position position="660"/>
    </location>
    <ligand>
        <name>Zn(2+)</name>
        <dbReference type="ChEBI" id="CHEBI:29105"/>
    </ligand>
</feature>
<feature type="binding site" evidence="1">
    <location>
        <position position="663"/>
    </location>
    <ligand>
        <name>Zn(2+)</name>
        <dbReference type="ChEBI" id="CHEBI:29105"/>
    </ligand>
</feature>
<feature type="binding site" evidence="1">
    <location>
        <position position="764"/>
    </location>
    <ligand>
        <name>Zn(2+)</name>
        <dbReference type="ChEBI" id="CHEBI:29105"/>
    </ligand>
</feature>
<feature type="binding site" evidence="1">
    <location>
        <position position="823"/>
    </location>
    <ligand>
        <name>Zn(2+)</name>
        <dbReference type="ChEBI" id="CHEBI:29105"/>
    </ligand>
</feature>
<comment type="catalytic activity">
    <reaction>
        <text>1-(5-phospho-beta-D-ribosyl)-5'-AMP + H2O = 1-(5-phospho-beta-D-ribosyl)-5-[(5-phospho-beta-D-ribosylamino)methylideneamino]imidazole-4-carboxamide</text>
        <dbReference type="Rhea" id="RHEA:20049"/>
        <dbReference type="ChEBI" id="CHEBI:15377"/>
        <dbReference type="ChEBI" id="CHEBI:58435"/>
        <dbReference type="ChEBI" id="CHEBI:59457"/>
        <dbReference type="EC" id="3.5.4.19"/>
    </reaction>
</comment>
<comment type="catalytic activity">
    <reaction>
        <text>1-(5-phospho-beta-D-ribosyl)-ATP + H2O = 1-(5-phospho-beta-D-ribosyl)-5'-AMP + diphosphate + H(+)</text>
        <dbReference type="Rhea" id="RHEA:22828"/>
        <dbReference type="ChEBI" id="CHEBI:15377"/>
        <dbReference type="ChEBI" id="CHEBI:15378"/>
        <dbReference type="ChEBI" id="CHEBI:33019"/>
        <dbReference type="ChEBI" id="CHEBI:59457"/>
        <dbReference type="ChEBI" id="CHEBI:73183"/>
        <dbReference type="EC" id="3.6.1.31"/>
    </reaction>
</comment>
<comment type="catalytic activity">
    <reaction>
        <text>L-histidinol + 2 NAD(+) + H2O = L-histidine + 2 NADH + 3 H(+)</text>
        <dbReference type="Rhea" id="RHEA:20641"/>
        <dbReference type="ChEBI" id="CHEBI:15377"/>
        <dbReference type="ChEBI" id="CHEBI:15378"/>
        <dbReference type="ChEBI" id="CHEBI:57540"/>
        <dbReference type="ChEBI" id="CHEBI:57595"/>
        <dbReference type="ChEBI" id="CHEBI:57699"/>
        <dbReference type="ChEBI" id="CHEBI:57945"/>
        <dbReference type="EC" id="1.1.1.23"/>
    </reaction>
</comment>
<comment type="cofactor">
    <cofactor evidence="1">
        <name>Zn(2+)</name>
        <dbReference type="ChEBI" id="CHEBI:29105"/>
    </cofactor>
    <text evidence="1">Binds 1 zinc ion.</text>
</comment>
<comment type="pathway">
    <text>Amino-acid biosynthesis; L-histidine biosynthesis; L-histidine from 5-phospho-alpha-D-ribose 1-diphosphate: step 2/9.</text>
</comment>
<comment type="pathway">
    <text>Amino-acid biosynthesis; L-histidine biosynthesis; L-histidine from 5-phospho-alpha-D-ribose 1-diphosphate: step 3/9.</text>
</comment>
<comment type="pathway">
    <text>Amino-acid biosynthesis; L-histidine biosynthesis; L-histidine from 5-phospho-alpha-D-ribose 1-diphosphate: step 9/9.</text>
</comment>
<comment type="similarity">
    <text evidence="2">In the C-terminal section; belongs to the histidinol dehydrogenase family.</text>
</comment>
<keyword id="KW-0028">Amino-acid biosynthesis</keyword>
<keyword id="KW-0067">ATP-binding</keyword>
<keyword id="KW-0368">Histidine biosynthesis</keyword>
<keyword id="KW-0378">Hydrolase</keyword>
<keyword id="KW-0479">Metal-binding</keyword>
<keyword id="KW-0511">Multifunctional enzyme</keyword>
<keyword id="KW-0520">NAD</keyword>
<keyword id="KW-0547">Nucleotide-binding</keyword>
<keyword id="KW-0560">Oxidoreductase</keyword>
<keyword id="KW-0862">Zinc</keyword>
<organism>
    <name type="scientific">Candida albicans</name>
    <name type="common">Yeast</name>
    <dbReference type="NCBI Taxonomy" id="5476"/>
    <lineage>
        <taxon>Eukaryota</taxon>
        <taxon>Fungi</taxon>
        <taxon>Dikarya</taxon>
        <taxon>Ascomycota</taxon>
        <taxon>Saccharomycotina</taxon>
        <taxon>Pichiomycetes</taxon>
        <taxon>Debaryomycetaceae</taxon>
        <taxon>Candida/Lodderomyces clade</taxon>
        <taxon>Candida</taxon>
    </lineage>
</organism>
<protein>
    <recommendedName>
        <fullName>Histidine biosynthesis trifunctional protein</fullName>
    </recommendedName>
    <domain>
        <recommendedName>
            <fullName>Phosphoribosyl-AMP cyclohydrolase</fullName>
            <ecNumber>3.5.4.19</ecNumber>
        </recommendedName>
    </domain>
    <domain>
        <recommendedName>
            <fullName>Phosphoribosyl-ATP pyrophosphohydrolase</fullName>
            <ecNumber>3.6.1.31</ecNumber>
        </recommendedName>
    </domain>
    <domain>
        <recommendedName>
            <fullName>Histidinol dehydrogenase</fullName>
            <shortName>HDH</shortName>
            <ecNumber>1.1.1.23</ecNumber>
        </recommendedName>
    </domain>
</protein>
<name>HIS2_CANAX</name>
<accession>O74712</accession>
<evidence type="ECO:0000250" key="1"/>
<evidence type="ECO:0000305" key="2"/>
<proteinExistence type="inferred from homology"/>
<dbReference type="EC" id="3.5.4.19"/>
<dbReference type="EC" id="3.6.1.31"/>
<dbReference type="EC" id="1.1.1.23"/>
<dbReference type="EMBL" id="AJ003115">
    <property type="protein sequence ID" value="CAA05871.1"/>
    <property type="molecule type" value="Genomic_DNA"/>
</dbReference>
<dbReference type="SMR" id="O74712"/>
<dbReference type="VEuPathDB" id="FungiDB:C4_00140C_A"/>
<dbReference type="VEuPathDB" id="FungiDB:CAWG_03769"/>
<dbReference type="VEuPathDB" id="FungiDB:CAWG_03770"/>
<dbReference type="UniPathway" id="UPA00031">
    <property type="reaction ID" value="UER00007"/>
</dbReference>
<dbReference type="UniPathway" id="UPA00031">
    <property type="reaction ID" value="UER00008"/>
</dbReference>
<dbReference type="UniPathway" id="UPA00031">
    <property type="reaction ID" value="UER00014"/>
</dbReference>
<dbReference type="GO" id="GO:0005829">
    <property type="term" value="C:cytosol"/>
    <property type="evidence" value="ECO:0007669"/>
    <property type="project" value="TreeGrafter"/>
</dbReference>
<dbReference type="GO" id="GO:0005524">
    <property type="term" value="F:ATP binding"/>
    <property type="evidence" value="ECO:0007669"/>
    <property type="project" value="UniProtKB-KW"/>
</dbReference>
<dbReference type="GO" id="GO:0004399">
    <property type="term" value="F:histidinol dehydrogenase activity"/>
    <property type="evidence" value="ECO:0007669"/>
    <property type="project" value="UniProtKB-EC"/>
</dbReference>
<dbReference type="GO" id="GO:0046872">
    <property type="term" value="F:metal ion binding"/>
    <property type="evidence" value="ECO:0007669"/>
    <property type="project" value="UniProtKB-KW"/>
</dbReference>
<dbReference type="GO" id="GO:0051287">
    <property type="term" value="F:NAD binding"/>
    <property type="evidence" value="ECO:0007669"/>
    <property type="project" value="InterPro"/>
</dbReference>
<dbReference type="GO" id="GO:0004635">
    <property type="term" value="F:phosphoribosyl-AMP cyclohydrolase activity"/>
    <property type="evidence" value="ECO:0007669"/>
    <property type="project" value="UniProtKB-EC"/>
</dbReference>
<dbReference type="GO" id="GO:0004636">
    <property type="term" value="F:phosphoribosyl-ATP diphosphatase activity"/>
    <property type="evidence" value="ECO:0007669"/>
    <property type="project" value="UniProtKB-EC"/>
</dbReference>
<dbReference type="GO" id="GO:0000105">
    <property type="term" value="P:L-histidine biosynthetic process"/>
    <property type="evidence" value="ECO:0007669"/>
    <property type="project" value="UniProtKB-UniPathway"/>
</dbReference>
<dbReference type="CDD" id="cd06572">
    <property type="entry name" value="Histidinol_dh"/>
    <property type="match status" value="1"/>
</dbReference>
<dbReference type="CDD" id="cd11546">
    <property type="entry name" value="NTP-PPase_His4"/>
    <property type="match status" value="1"/>
</dbReference>
<dbReference type="FunFam" id="1.10.287.1080:FF:000002">
    <property type="entry name" value="Histidine biosynthesis bifunctional protein HisIE"/>
    <property type="match status" value="1"/>
</dbReference>
<dbReference type="FunFam" id="3.10.20.810:FF:000002">
    <property type="entry name" value="Histidine biosynthesis trifunctional protein"/>
    <property type="match status" value="1"/>
</dbReference>
<dbReference type="FunFam" id="3.40.50.1980:FF:000050">
    <property type="entry name" value="Histidine biosynthesis trifunctional protein"/>
    <property type="match status" value="1"/>
</dbReference>
<dbReference type="FunFam" id="3.40.50.1980:FF:000001">
    <property type="entry name" value="Histidinol dehydrogenase"/>
    <property type="match status" value="1"/>
</dbReference>
<dbReference type="FunFam" id="1.20.5.1300:FF:000002">
    <property type="entry name" value="Histidinol dehydrogenase, chloroplastic"/>
    <property type="match status" value="1"/>
</dbReference>
<dbReference type="Gene3D" id="1.20.5.1300">
    <property type="match status" value="1"/>
</dbReference>
<dbReference type="Gene3D" id="1.10.287.1080">
    <property type="entry name" value="MazG-like"/>
    <property type="match status" value="1"/>
</dbReference>
<dbReference type="Gene3D" id="3.40.50.1980">
    <property type="entry name" value="Nitrogenase molybdenum iron protein domain"/>
    <property type="match status" value="2"/>
</dbReference>
<dbReference type="Gene3D" id="3.10.20.810">
    <property type="entry name" value="Phosphoribosyl-AMP cyclohydrolase"/>
    <property type="match status" value="1"/>
</dbReference>
<dbReference type="HAMAP" id="MF_01024">
    <property type="entry name" value="HisD"/>
    <property type="match status" value="1"/>
</dbReference>
<dbReference type="InterPro" id="IPR016161">
    <property type="entry name" value="Ald_DH/histidinol_DH"/>
</dbReference>
<dbReference type="InterPro" id="IPR008179">
    <property type="entry name" value="HisE"/>
</dbReference>
<dbReference type="InterPro" id="IPR016298">
    <property type="entry name" value="Histidine_synth_trifunct"/>
</dbReference>
<dbReference type="InterPro" id="IPR001692">
    <property type="entry name" value="Histidinol_DH_CS"/>
</dbReference>
<dbReference type="InterPro" id="IPR012131">
    <property type="entry name" value="Hstdl_DH"/>
</dbReference>
<dbReference type="InterPro" id="IPR021130">
    <property type="entry name" value="PRib-ATP_PPHydrolase-like"/>
</dbReference>
<dbReference type="InterPro" id="IPR002496">
    <property type="entry name" value="PRib_AMP_CycHydrolase_dom"/>
</dbReference>
<dbReference type="InterPro" id="IPR038019">
    <property type="entry name" value="PRib_AMP_CycHydrolase_sf"/>
</dbReference>
<dbReference type="NCBIfam" id="TIGR00069">
    <property type="entry name" value="hisD"/>
    <property type="match status" value="1"/>
</dbReference>
<dbReference type="NCBIfam" id="TIGR03188">
    <property type="entry name" value="histidine_hisI"/>
    <property type="match status" value="1"/>
</dbReference>
<dbReference type="PANTHER" id="PTHR21256:SF2">
    <property type="entry name" value="HISTIDINE BIOSYNTHESIS TRIFUNCTIONAL PROTEIN"/>
    <property type="match status" value="1"/>
</dbReference>
<dbReference type="PANTHER" id="PTHR21256">
    <property type="entry name" value="HISTIDINOL DEHYDROGENASE HDH"/>
    <property type="match status" value="1"/>
</dbReference>
<dbReference type="Pfam" id="PF00815">
    <property type="entry name" value="Histidinol_dh"/>
    <property type="match status" value="1"/>
</dbReference>
<dbReference type="Pfam" id="PF01502">
    <property type="entry name" value="PRA-CH"/>
    <property type="match status" value="1"/>
</dbReference>
<dbReference type="Pfam" id="PF01503">
    <property type="entry name" value="PRA-PH"/>
    <property type="match status" value="1"/>
</dbReference>
<dbReference type="PIRSF" id="PIRSF001257">
    <property type="entry name" value="His_trifunctional"/>
    <property type="match status" value="1"/>
</dbReference>
<dbReference type="PRINTS" id="PR00083">
    <property type="entry name" value="HOLDHDRGNASE"/>
</dbReference>
<dbReference type="SUPFAM" id="SSF53720">
    <property type="entry name" value="ALDH-like"/>
    <property type="match status" value="1"/>
</dbReference>
<dbReference type="SUPFAM" id="SSF101386">
    <property type="entry name" value="all-alpha NTP pyrophosphatases"/>
    <property type="match status" value="1"/>
</dbReference>
<dbReference type="SUPFAM" id="SSF141734">
    <property type="entry name" value="HisI-like"/>
    <property type="match status" value="1"/>
</dbReference>
<dbReference type="PROSITE" id="PS00611">
    <property type="entry name" value="HISOL_DEHYDROGENASE"/>
    <property type="match status" value="1"/>
</dbReference>
<gene>
    <name type="primary">HIS4</name>
</gene>